<organism>
    <name type="scientific">Staphylococcus aureus (strain Mu50 / ATCC 700699)</name>
    <dbReference type="NCBI Taxonomy" id="158878"/>
    <lineage>
        <taxon>Bacteria</taxon>
        <taxon>Bacillati</taxon>
        <taxon>Bacillota</taxon>
        <taxon>Bacilli</taxon>
        <taxon>Bacillales</taxon>
        <taxon>Staphylococcaceae</taxon>
        <taxon>Staphylococcus</taxon>
    </lineage>
</organism>
<reference key="1">
    <citation type="journal article" date="2001" name="Lancet">
        <title>Whole genome sequencing of meticillin-resistant Staphylococcus aureus.</title>
        <authorList>
            <person name="Kuroda M."/>
            <person name="Ohta T."/>
            <person name="Uchiyama I."/>
            <person name="Baba T."/>
            <person name="Yuzawa H."/>
            <person name="Kobayashi I."/>
            <person name="Cui L."/>
            <person name="Oguchi A."/>
            <person name="Aoki K."/>
            <person name="Nagai Y."/>
            <person name="Lian J.-Q."/>
            <person name="Ito T."/>
            <person name="Kanamori M."/>
            <person name="Matsumaru H."/>
            <person name="Maruyama A."/>
            <person name="Murakami H."/>
            <person name="Hosoyama A."/>
            <person name="Mizutani-Ui Y."/>
            <person name="Takahashi N.K."/>
            <person name="Sawano T."/>
            <person name="Inoue R."/>
            <person name="Kaito C."/>
            <person name="Sekimizu K."/>
            <person name="Hirakawa H."/>
            <person name="Kuhara S."/>
            <person name="Goto S."/>
            <person name="Yabuzaki J."/>
            <person name="Kanehisa M."/>
            <person name="Yamashita A."/>
            <person name="Oshima K."/>
            <person name="Furuya K."/>
            <person name="Yoshino C."/>
            <person name="Shiba T."/>
            <person name="Hattori M."/>
            <person name="Ogasawara N."/>
            <person name="Hayashi H."/>
            <person name="Hiramatsu K."/>
        </authorList>
    </citation>
    <scope>NUCLEOTIDE SEQUENCE [LARGE SCALE GENOMIC DNA]</scope>
    <source>
        <strain>Mu50 / ATCC 700699</strain>
    </source>
</reference>
<comment type="function">
    <text evidence="1">The UvrABC repair system catalyzes the recognition and processing of DNA lesions. A damage recognition complex composed of 2 UvrA and 2 UvrB subunits scans DNA for abnormalities. Upon binding of the UvrA(2)B(2) complex to a putative damaged site, the DNA wraps around one UvrB monomer. DNA wrap is dependent on ATP binding by UvrB and probably causes local melting of the DNA helix, facilitating insertion of UvrB beta-hairpin between the DNA strands. Then UvrB probes one DNA strand for the presence of a lesion. If a lesion is found the UvrA subunits dissociate and the UvrB-DNA preincision complex is formed. This complex is subsequently bound by UvrC and the second UvrB is released. If no lesion is found, the DNA wraps around the other UvrB subunit that will check the other stand for damage.</text>
</comment>
<comment type="subunit">
    <text evidence="1">Forms a heterotetramer with UvrA during the search for lesions. Interacts with UvrC in an incision complex.</text>
</comment>
<comment type="subcellular location">
    <subcellularLocation>
        <location evidence="1">Cytoplasm</location>
    </subcellularLocation>
</comment>
<comment type="domain">
    <text evidence="1">The beta-hairpin motif is involved in DNA binding.</text>
</comment>
<comment type="similarity">
    <text evidence="1">Belongs to the UvrB family.</text>
</comment>
<evidence type="ECO:0000255" key="1">
    <source>
        <dbReference type="HAMAP-Rule" id="MF_00204"/>
    </source>
</evidence>
<accession>P67424</accession>
<accession>Q99VL7</accession>
<dbReference type="EMBL" id="BA000017">
    <property type="protein sequence ID" value="BAB56920.1"/>
    <property type="molecule type" value="Genomic_DNA"/>
</dbReference>
<dbReference type="SMR" id="P67424"/>
<dbReference type="KEGG" id="sav:SAV0758"/>
<dbReference type="HOGENOM" id="CLU_009621_2_1_9"/>
<dbReference type="PhylomeDB" id="P67424"/>
<dbReference type="Proteomes" id="UP000002481">
    <property type="component" value="Chromosome"/>
</dbReference>
<dbReference type="GO" id="GO:0005737">
    <property type="term" value="C:cytoplasm"/>
    <property type="evidence" value="ECO:0007669"/>
    <property type="project" value="UniProtKB-SubCell"/>
</dbReference>
<dbReference type="GO" id="GO:0009380">
    <property type="term" value="C:excinuclease repair complex"/>
    <property type="evidence" value="ECO:0007669"/>
    <property type="project" value="InterPro"/>
</dbReference>
<dbReference type="GO" id="GO:0005524">
    <property type="term" value="F:ATP binding"/>
    <property type="evidence" value="ECO:0007669"/>
    <property type="project" value="UniProtKB-UniRule"/>
</dbReference>
<dbReference type="GO" id="GO:0016887">
    <property type="term" value="F:ATP hydrolysis activity"/>
    <property type="evidence" value="ECO:0007669"/>
    <property type="project" value="InterPro"/>
</dbReference>
<dbReference type="GO" id="GO:0003677">
    <property type="term" value="F:DNA binding"/>
    <property type="evidence" value="ECO:0007669"/>
    <property type="project" value="UniProtKB-UniRule"/>
</dbReference>
<dbReference type="GO" id="GO:0009381">
    <property type="term" value="F:excinuclease ABC activity"/>
    <property type="evidence" value="ECO:0007669"/>
    <property type="project" value="UniProtKB-UniRule"/>
</dbReference>
<dbReference type="GO" id="GO:0006289">
    <property type="term" value="P:nucleotide-excision repair"/>
    <property type="evidence" value="ECO:0007669"/>
    <property type="project" value="UniProtKB-UniRule"/>
</dbReference>
<dbReference type="GO" id="GO:0009432">
    <property type="term" value="P:SOS response"/>
    <property type="evidence" value="ECO:0007669"/>
    <property type="project" value="UniProtKB-UniRule"/>
</dbReference>
<dbReference type="CDD" id="cd17916">
    <property type="entry name" value="DEXHc_UvrB"/>
    <property type="match status" value="1"/>
</dbReference>
<dbReference type="CDD" id="cd18790">
    <property type="entry name" value="SF2_C_UvrB"/>
    <property type="match status" value="1"/>
</dbReference>
<dbReference type="Gene3D" id="3.40.50.300">
    <property type="entry name" value="P-loop containing nucleotide triphosphate hydrolases"/>
    <property type="match status" value="3"/>
</dbReference>
<dbReference type="Gene3D" id="4.10.860.10">
    <property type="entry name" value="UVR domain"/>
    <property type="match status" value="1"/>
</dbReference>
<dbReference type="HAMAP" id="MF_00204">
    <property type="entry name" value="UvrB"/>
    <property type="match status" value="1"/>
</dbReference>
<dbReference type="InterPro" id="IPR006935">
    <property type="entry name" value="Helicase/UvrB_N"/>
</dbReference>
<dbReference type="InterPro" id="IPR014001">
    <property type="entry name" value="Helicase_ATP-bd"/>
</dbReference>
<dbReference type="InterPro" id="IPR001650">
    <property type="entry name" value="Helicase_C-like"/>
</dbReference>
<dbReference type="InterPro" id="IPR027417">
    <property type="entry name" value="P-loop_NTPase"/>
</dbReference>
<dbReference type="InterPro" id="IPR001943">
    <property type="entry name" value="UVR_dom"/>
</dbReference>
<dbReference type="InterPro" id="IPR036876">
    <property type="entry name" value="UVR_dom_sf"/>
</dbReference>
<dbReference type="InterPro" id="IPR004807">
    <property type="entry name" value="UvrB"/>
</dbReference>
<dbReference type="InterPro" id="IPR041471">
    <property type="entry name" value="UvrB_inter"/>
</dbReference>
<dbReference type="InterPro" id="IPR024759">
    <property type="entry name" value="UvrB_YAD/RRR_dom"/>
</dbReference>
<dbReference type="NCBIfam" id="NF003673">
    <property type="entry name" value="PRK05298.1"/>
    <property type="match status" value="1"/>
</dbReference>
<dbReference type="NCBIfam" id="TIGR00631">
    <property type="entry name" value="uvrb"/>
    <property type="match status" value="1"/>
</dbReference>
<dbReference type="PANTHER" id="PTHR24029">
    <property type="entry name" value="UVRABC SYSTEM PROTEIN B"/>
    <property type="match status" value="1"/>
</dbReference>
<dbReference type="PANTHER" id="PTHR24029:SF0">
    <property type="entry name" value="UVRABC SYSTEM PROTEIN B"/>
    <property type="match status" value="1"/>
</dbReference>
<dbReference type="Pfam" id="PF00271">
    <property type="entry name" value="Helicase_C"/>
    <property type="match status" value="1"/>
</dbReference>
<dbReference type="Pfam" id="PF04851">
    <property type="entry name" value="ResIII"/>
    <property type="match status" value="1"/>
</dbReference>
<dbReference type="Pfam" id="PF02151">
    <property type="entry name" value="UVR"/>
    <property type="match status" value="1"/>
</dbReference>
<dbReference type="Pfam" id="PF12344">
    <property type="entry name" value="UvrB"/>
    <property type="match status" value="1"/>
</dbReference>
<dbReference type="Pfam" id="PF17757">
    <property type="entry name" value="UvrB_inter"/>
    <property type="match status" value="1"/>
</dbReference>
<dbReference type="SMART" id="SM00487">
    <property type="entry name" value="DEXDc"/>
    <property type="match status" value="1"/>
</dbReference>
<dbReference type="SMART" id="SM00490">
    <property type="entry name" value="HELICc"/>
    <property type="match status" value="1"/>
</dbReference>
<dbReference type="SUPFAM" id="SSF46600">
    <property type="entry name" value="C-terminal UvrC-binding domain of UvrB"/>
    <property type="match status" value="1"/>
</dbReference>
<dbReference type="SUPFAM" id="SSF52540">
    <property type="entry name" value="P-loop containing nucleoside triphosphate hydrolases"/>
    <property type="match status" value="2"/>
</dbReference>
<dbReference type="PROSITE" id="PS51192">
    <property type="entry name" value="HELICASE_ATP_BIND_1"/>
    <property type="match status" value="1"/>
</dbReference>
<dbReference type="PROSITE" id="PS51194">
    <property type="entry name" value="HELICASE_CTER"/>
    <property type="match status" value="1"/>
</dbReference>
<dbReference type="PROSITE" id="PS50151">
    <property type="entry name" value="UVR"/>
    <property type="match status" value="1"/>
</dbReference>
<proteinExistence type="inferred from homology"/>
<keyword id="KW-0067">ATP-binding</keyword>
<keyword id="KW-0963">Cytoplasm</keyword>
<keyword id="KW-0227">DNA damage</keyword>
<keyword id="KW-0228">DNA excision</keyword>
<keyword id="KW-0234">DNA repair</keyword>
<keyword id="KW-0267">Excision nuclease</keyword>
<keyword id="KW-0547">Nucleotide-binding</keyword>
<keyword id="KW-0742">SOS response</keyword>
<feature type="chain" id="PRO_0000138425" description="UvrABC system protein B">
    <location>
        <begin position="1"/>
        <end position="663"/>
    </location>
</feature>
<feature type="domain" description="Helicase ATP-binding" evidence="1">
    <location>
        <begin position="30"/>
        <end position="417"/>
    </location>
</feature>
<feature type="domain" description="Helicase C-terminal" evidence="1">
    <location>
        <begin position="434"/>
        <end position="600"/>
    </location>
</feature>
<feature type="domain" description="UVR" evidence="1">
    <location>
        <begin position="627"/>
        <end position="662"/>
    </location>
</feature>
<feature type="short sequence motif" description="Beta-hairpin">
    <location>
        <begin position="96"/>
        <end position="119"/>
    </location>
</feature>
<feature type="binding site" evidence="1">
    <location>
        <begin position="43"/>
        <end position="50"/>
    </location>
    <ligand>
        <name>ATP</name>
        <dbReference type="ChEBI" id="CHEBI:30616"/>
    </ligand>
</feature>
<gene>
    <name evidence="1" type="primary">uvrB</name>
    <name type="ordered locus">SAV0758</name>
</gene>
<name>UVRB_STAAM</name>
<sequence>MTMVEHYPFKIHSDFEPQGDQPQAIKEIVDGIKAGKRHQTLLGATGTGKTFTMSNVIKEVGKPTLIIAHNKTLAGQLYSEFKEFFPENRVEYFVSYYDYYQPEAYVPSTDTFIEKDASINDEIDQLRHSATSALFERDDVIIIASVSCIYGLGNPEEYKDLVVSVRVGMEMDRSELLRKLVDVQYTRNDIDFQRGTFRVRGDVVEIFPASKEELCIRVEFFGDEIDRIREVNYLTGEVLKEREHFAIFPASHFVTREEKLKVAIERIEKELEERLKELRDENKLLEAQRLEQRTNYDLEMMREMGFCSGIENYSVHLTLRPLGSTPYTLLDYFGDDWLVMIDESHVTLPQVRGMYNGDRARKQVLVDHGFRLPSALDNRPLKFEEFEEKTKQLVYVSATPGPYEIEHTDKMVEQIIRPTGLLDPKIEVRPTENQIDDLLSEIQTRVERNERVLVTTLTKKMSEDLTTYMKEAGIKVNYLHSEIKTLERIEIIRDLRMGTYDVIVGINLLREGIDIPEVSLVVILDADKEGFLRSNRSLIQTIGRAARNDKGEVIMYADKMTDSMKYAIDETQRRREIQMKHNEKHGITPKTINKKIHDLISATVENDENNDKAQTVIPKKMTKKERQKTIDNIEKEMKQAAKDLDFEKATELRDMLFELKAEG</sequence>
<protein>
    <recommendedName>
        <fullName evidence="1">UvrABC system protein B</fullName>
        <shortName evidence="1">Protein UvrB</shortName>
    </recommendedName>
    <alternativeName>
        <fullName evidence="1">Excinuclease ABC subunit B</fullName>
    </alternativeName>
</protein>